<sequence>MIETSFIKWINSFKDLSNSIEDLKELSNGTIFNEICCQIAPKYFDIDSLRKDGLDNWIFREENIKNIVERVDEFYIEEMGLNDQISSINCEEIANENIDEIILLIEAILGMAMESENNEAVIENILSLDQDTQNDLMVVVAKIQQSHQPNTVDNSKSFDKDGSILSQSPSQSNNSISNNNNNNNIDSSNISKSNISSNNNNNNSSNNNKEEILNLQNEIEKLKREKQEIQNDLDESNIQLSNVTMDRDRITIDKQKTEEVCSSLHESIIGLQKQLDETMAQTTTMNALNDETYKTEINDLHMQVESKEKQLSELKKKVDEANRLANENRSLRDEIDILREKAANAEATEEKLKKHQKKIEEIGDLKKKIKELEDQNDSYIQQTLDLEEQLSKNNTYRTQADSGKQQISSLKIELAKLELSLKSIKEDRDKLSESLNTVELERDSLQSQVTNLRNTIDNQQQEYETKFVDLQSSISLNSGGSGGLGDEVIDGSTKERIARLERDNKRLKEVAEKASELENQLEDANQSKELLTIQIKQLEEQKQQSNNTNNNNNNNNMVDSSEIESLKQQLKEKEKEISTLKRKLEESNLSLDENRKQLVELSQRPTTQSPGDIEKLENYENLLKENDGLEGRLRAARNIIKDLREKHKSYSNQETQLATKDEVITKLEGLVKKKTDINEDLRKQLEEGREESQREINLMLSAFLKIGLEMEQVKIQNISSSKEPRSFLNKKRAD</sequence>
<feature type="chain" id="PRO_0000333270" description="Protein hook homolog">
    <location>
        <begin position="1"/>
        <end position="734"/>
    </location>
</feature>
<feature type="domain" description="Calponin-homology (CH)" evidence="3">
    <location>
        <begin position="1"/>
        <end position="113"/>
    </location>
</feature>
<feature type="region of interest" description="Disordered" evidence="4">
    <location>
        <begin position="146"/>
        <end position="208"/>
    </location>
</feature>
<feature type="coiled-coil region" evidence="2">
    <location>
        <begin position="200"/>
        <end position="245"/>
    </location>
</feature>
<feature type="coiled-coil region" evidence="2">
    <location>
        <begin position="291"/>
        <end position="700"/>
    </location>
</feature>
<feature type="compositionally biased region" description="Polar residues" evidence="4">
    <location>
        <begin position="146"/>
        <end position="155"/>
    </location>
</feature>
<feature type="compositionally biased region" description="Low complexity" evidence="4">
    <location>
        <begin position="163"/>
        <end position="207"/>
    </location>
</feature>
<protein>
    <recommendedName>
        <fullName>Protein hook homolog</fullName>
    </recommendedName>
    <alternativeName>
        <fullName>DdHk3</fullName>
    </alternativeName>
</protein>
<reference key="1">
    <citation type="journal article" date="2005" name="Nature">
        <title>The genome of the social amoeba Dictyostelium discoideum.</title>
        <authorList>
            <person name="Eichinger L."/>
            <person name="Pachebat J.A."/>
            <person name="Gloeckner G."/>
            <person name="Rajandream M.A."/>
            <person name="Sucgang R."/>
            <person name="Berriman M."/>
            <person name="Song J."/>
            <person name="Olsen R."/>
            <person name="Szafranski K."/>
            <person name="Xu Q."/>
            <person name="Tunggal B."/>
            <person name="Kummerfeld S."/>
            <person name="Madera M."/>
            <person name="Konfortov B.A."/>
            <person name="Rivero F."/>
            <person name="Bankier A.T."/>
            <person name="Lehmann R."/>
            <person name="Hamlin N."/>
            <person name="Davies R."/>
            <person name="Gaudet P."/>
            <person name="Fey P."/>
            <person name="Pilcher K."/>
            <person name="Chen G."/>
            <person name="Saunders D."/>
            <person name="Sodergren E.J."/>
            <person name="Davis P."/>
            <person name="Kerhornou A."/>
            <person name="Nie X."/>
            <person name="Hall N."/>
            <person name="Anjard C."/>
            <person name="Hemphill L."/>
            <person name="Bason N."/>
            <person name="Farbrother P."/>
            <person name="Desany B."/>
            <person name="Just E."/>
            <person name="Morio T."/>
            <person name="Rost R."/>
            <person name="Churcher C.M."/>
            <person name="Cooper J."/>
            <person name="Haydock S."/>
            <person name="van Driessche N."/>
            <person name="Cronin A."/>
            <person name="Goodhead I."/>
            <person name="Muzny D.M."/>
            <person name="Mourier T."/>
            <person name="Pain A."/>
            <person name="Lu M."/>
            <person name="Harper D."/>
            <person name="Lindsay R."/>
            <person name="Hauser H."/>
            <person name="James K.D."/>
            <person name="Quiles M."/>
            <person name="Madan Babu M."/>
            <person name="Saito T."/>
            <person name="Buchrieser C."/>
            <person name="Wardroper A."/>
            <person name="Felder M."/>
            <person name="Thangavelu M."/>
            <person name="Johnson D."/>
            <person name="Knights A."/>
            <person name="Loulseged H."/>
            <person name="Mungall K.L."/>
            <person name="Oliver K."/>
            <person name="Price C."/>
            <person name="Quail M.A."/>
            <person name="Urushihara H."/>
            <person name="Hernandez J."/>
            <person name="Rabbinowitsch E."/>
            <person name="Steffen D."/>
            <person name="Sanders M."/>
            <person name="Ma J."/>
            <person name="Kohara Y."/>
            <person name="Sharp S."/>
            <person name="Simmonds M.N."/>
            <person name="Spiegler S."/>
            <person name="Tivey A."/>
            <person name="Sugano S."/>
            <person name="White B."/>
            <person name="Walker D."/>
            <person name="Woodward J.R."/>
            <person name="Winckler T."/>
            <person name="Tanaka Y."/>
            <person name="Shaulsky G."/>
            <person name="Schleicher M."/>
            <person name="Weinstock G.M."/>
            <person name="Rosenthal A."/>
            <person name="Cox E.C."/>
            <person name="Chisholm R.L."/>
            <person name="Gibbs R.A."/>
            <person name="Loomis W.F."/>
            <person name="Platzer M."/>
            <person name="Kay R.R."/>
            <person name="Williams J.G."/>
            <person name="Dear P.H."/>
            <person name="Noegel A.A."/>
            <person name="Barrell B.G."/>
            <person name="Kuspa A."/>
        </authorList>
    </citation>
    <scope>NUCLEOTIDE SEQUENCE [LARGE SCALE GENOMIC DNA]</scope>
    <source>
        <strain>AX4</strain>
    </source>
</reference>
<gene>
    <name type="primary">hook</name>
    <name type="synonym">hk3</name>
    <name type="ORF">DDB_G0288691</name>
</gene>
<proteinExistence type="inferred from homology"/>
<comment type="function">
    <text evidence="1">Cytoskeletal linker protein involved in tethering membrane bound organelles to the cytoskeleton.</text>
</comment>
<comment type="subunit">
    <text evidence="1">Homodimer. Interacts with microtubules (By similarity).</text>
</comment>
<comment type="subcellular location">
    <subcellularLocation>
        <location evidence="1">Cytoplasm</location>
        <location evidence="1">Cytoskeleton</location>
    </subcellularLocation>
</comment>
<comment type="domain">
    <text evidence="1">The large coiled coil domain may mediate homodimerization.</text>
</comment>
<comment type="similarity">
    <text evidence="5">Belongs to the hook family.</text>
</comment>
<name>HOOK_DICDI</name>
<accession>Q54IK9</accession>
<dbReference type="EMBL" id="AAFI02000120">
    <property type="protein sequence ID" value="EAL63077.1"/>
    <property type="molecule type" value="Genomic_DNA"/>
</dbReference>
<dbReference type="RefSeq" id="XP_636577.1">
    <property type="nucleotide sequence ID" value="XM_631485.1"/>
</dbReference>
<dbReference type="SMR" id="Q54IK9"/>
<dbReference type="FunCoup" id="Q54IK9">
    <property type="interactions" value="43"/>
</dbReference>
<dbReference type="STRING" id="44689.Q54IK9"/>
<dbReference type="PaxDb" id="44689-DDB0219928"/>
<dbReference type="EnsemblProtists" id="EAL63077">
    <property type="protein sequence ID" value="EAL63077"/>
    <property type="gene ID" value="DDB_G0288691"/>
</dbReference>
<dbReference type="GeneID" id="8626750"/>
<dbReference type="KEGG" id="ddi:DDB_G0288691"/>
<dbReference type="dictyBase" id="DDB_G0288691">
    <property type="gene designation" value="hook"/>
</dbReference>
<dbReference type="VEuPathDB" id="AmoebaDB:DDB_G0288691"/>
<dbReference type="eggNOG" id="ENOG502RSPB">
    <property type="taxonomic scope" value="Eukaryota"/>
</dbReference>
<dbReference type="HOGENOM" id="CLU_377875_0_0_1"/>
<dbReference type="InParanoid" id="Q54IK9"/>
<dbReference type="OMA" id="DAKYRKC"/>
<dbReference type="PhylomeDB" id="Q54IK9"/>
<dbReference type="PRO" id="PR:Q54IK9"/>
<dbReference type="Proteomes" id="UP000002195">
    <property type="component" value="Chromosome 5"/>
</dbReference>
<dbReference type="GO" id="GO:0005813">
    <property type="term" value="C:centrosome"/>
    <property type="evidence" value="ECO:0000304"/>
    <property type="project" value="dictyBase"/>
</dbReference>
<dbReference type="GO" id="GO:0005737">
    <property type="term" value="C:cytoplasm"/>
    <property type="evidence" value="ECO:0000318"/>
    <property type="project" value="GO_Central"/>
</dbReference>
<dbReference type="GO" id="GO:0005874">
    <property type="term" value="C:microtubule"/>
    <property type="evidence" value="ECO:0007669"/>
    <property type="project" value="UniProtKB-KW"/>
</dbReference>
<dbReference type="GO" id="GO:0005815">
    <property type="term" value="C:microtubule organizing center"/>
    <property type="evidence" value="ECO:0000318"/>
    <property type="project" value="GO_Central"/>
</dbReference>
<dbReference type="GO" id="GO:0051959">
    <property type="term" value="F:dynein light intermediate chain binding"/>
    <property type="evidence" value="ECO:0000318"/>
    <property type="project" value="GO_Central"/>
</dbReference>
<dbReference type="GO" id="GO:0008017">
    <property type="term" value="F:microtubule binding"/>
    <property type="evidence" value="ECO:0000250"/>
    <property type="project" value="dictyBase"/>
</dbReference>
<dbReference type="GO" id="GO:0031122">
    <property type="term" value="P:cytoplasmic microtubule organization"/>
    <property type="evidence" value="ECO:0000250"/>
    <property type="project" value="dictyBase"/>
</dbReference>
<dbReference type="GO" id="GO:0030705">
    <property type="term" value="P:cytoskeleton-dependent intracellular transport"/>
    <property type="evidence" value="ECO:0000318"/>
    <property type="project" value="GO_Central"/>
</dbReference>
<dbReference type="CDD" id="cd22211">
    <property type="entry name" value="HkD_SF"/>
    <property type="match status" value="1"/>
</dbReference>
<dbReference type="Gene3D" id="1.10.287.1490">
    <property type="match status" value="1"/>
</dbReference>
<dbReference type="Gene3D" id="1.10.418.10">
    <property type="entry name" value="Calponin-like domain"/>
    <property type="match status" value="1"/>
</dbReference>
<dbReference type="InterPro" id="IPR001715">
    <property type="entry name" value="CH_dom"/>
</dbReference>
<dbReference type="InterPro" id="IPR036872">
    <property type="entry name" value="CH_dom_sf"/>
</dbReference>
<dbReference type="InterPro" id="IPR008636">
    <property type="entry name" value="Hook_C"/>
</dbReference>
<dbReference type="InterPro" id="IPR043936">
    <property type="entry name" value="HOOK_N"/>
</dbReference>
<dbReference type="PANTHER" id="PTHR18947:SF28">
    <property type="entry name" value="GIRDIN, ISOFORM A"/>
    <property type="match status" value="1"/>
</dbReference>
<dbReference type="PANTHER" id="PTHR18947">
    <property type="entry name" value="HOOK PROTEINS"/>
    <property type="match status" value="1"/>
</dbReference>
<dbReference type="Pfam" id="PF05622">
    <property type="entry name" value="HOOK"/>
    <property type="match status" value="1"/>
</dbReference>
<dbReference type="Pfam" id="PF19047">
    <property type="entry name" value="HOOK_N"/>
    <property type="match status" value="1"/>
</dbReference>
<dbReference type="SUPFAM" id="SSF116907">
    <property type="entry name" value="Hook domain"/>
    <property type="match status" value="1"/>
</dbReference>
<dbReference type="PROSITE" id="PS50021">
    <property type="entry name" value="CH"/>
    <property type="match status" value="1"/>
</dbReference>
<keyword id="KW-0175">Coiled coil</keyword>
<keyword id="KW-0963">Cytoplasm</keyword>
<keyword id="KW-0206">Cytoskeleton</keyword>
<keyword id="KW-0493">Microtubule</keyword>
<keyword id="KW-1185">Reference proteome</keyword>
<evidence type="ECO:0000250" key="1"/>
<evidence type="ECO:0000255" key="2"/>
<evidence type="ECO:0000255" key="3">
    <source>
        <dbReference type="PROSITE-ProRule" id="PRU00044"/>
    </source>
</evidence>
<evidence type="ECO:0000256" key="4">
    <source>
        <dbReference type="SAM" id="MobiDB-lite"/>
    </source>
</evidence>
<evidence type="ECO:0000305" key="5"/>
<organism>
    <name type="scientific">Dictyostelium discoideum</name>
    <name type="common">Social amoeba</name>
    <dbReference type="NCBI Taxonomy" id="44689"/>
    <lineage>
        <taxon>Eukaryota</taxon>
        <taxon>Amoebozoa</taxon>
        <taxon>Evosea</taxon>
        <taxon>Eumycetozoa</taxon>
        <taxon>Dictyostelia</taxon>
        <taxon>Dictyosteliales</taxon>
        <taxon>Dictyosteliaceae</taxon>
        <taxon>Dictyostelium</taxon>
    </lineage>
</organism>